<accession>P55597</accession>
<name>Y4OL_SINFN</name>
<organism>
    <name type="scientific">Sinorhizobium fredii (strain NBRC 101917 / NGR234)</name>
    <dbReference type="NCBI Taxonomy" id="394"/>
    <lineage>
        <taxon>Bacteria</taxon>
        <taxon>Pseudomonadati</taxon>
        <taxon>Pseudomonadota</taxon>
        <taxon>Alphaproteobacteria</taxon>
        <taxon>Hyphomicrobiales</taxon>
        <taxon>Rhizobiaceae</taxon>
        <taxon>Sinorhizobium/Ensifer group</taxon>
        <taxon>Sinorhizobium</taxon>
    </lineage>
</organism>
<reference key="1">
    <citation type="journal article" date="1997" name="Nature">
        <title>Molecular basis of symbiosis between Rhizobium and legumes.</title>
        <authorList>
            <person name="Freiberg C.A."/>
            <person name="Fellay R."/>
            <person name="Bairoch A."/>
            <person name="Broughton W.J."/>
            <person name="Rosenthal A."/>
            <person name="Perret X."/>
        </authorList>
    </citation>
    <scope>NUCLEOTIDE SEQUENCE [LARGE SCALE GENOMIC DNA]</scope>
    <source>
        <strain>NBRC 101917 / NGR234</strain>
    </source>
</reference>
<reference key="2">
    <citation type="journal article" date="2009" name="Appl. Environ. Microbiol.">
        <title>Rhizobium sp. strain NGR234 possesses a remarkable number of secretion systems.</title>
        <authorList>
            <person name="Schmeisser C."/>
            <person name="Liesegang H."/>
            <person name="Krysciak D."/>
            <person name="Bakkou N."/>
            <person name="Le Quere A."/>
            <person name="Wollherr A."/>
            <person name="Heinemeyer I."/>
            <person name="Morgenstern B."/>
            <person name="Pommerening-Roeser A."/>
            <person name="Flores M."/>
            <person name="Palacios R."/>
            <person name="Brenner S."/>
            <person name="Gottschalk G."/>
            <person name="Schmitz R.A."/>
            <person name="Broughton W.J."/>
            <person name="Perret X."/>
            <person name="Strittmatter A.W."/>
            <person name="Streit W.R."/>
        </authorList>
    </citation>
    <scope>NUCLEOTIDE SEQUENCE [LARGE SCALE GENOMIC DNA]</scope>
    <source>
        <strain>NBRC 101917 / NGR234</strain>
    </source>
</reference>
<gene>
    <name type="ordered locus">NGR_a02230</name>
    <name type="ORF">y4oL</name>
</gene>
<feature type="chain" id="PRO_0000200927" description="Uncharacterized protein y4oL">
    <location>
        <begin position="1"/>
        <end position="88"/>
    </location>
</feature>
<protein>
    <recommendedName>
        <fullName>Uncharacterized protein y4oL</fullName>
    </recommendedName>
</protein>
<proteinExistence type="predicted"/>
<keyword id="KW-0614">Plasmid</keyword>
<keyword id="KW-1185">Reference proteome</keyword>
<sequence>MSENGKDVYEALRADVICGTACARRMGAIVFHGLWRGLAVLIAPHQSAIARQQSAPRFKTTSMVAHDRQLVHMLANMVLAAETGSHVY</sequence>
<geneLocation type="plasmid">
    <name>sym pNGR234a</name>
</geneLocation>
<dbReference type="EMBL" id="U00090">
    <property type="protein sequence ID" value="AAB91799.1"/>
    <property type="molecule type" value="Genomic_DNA"/>
</dbReference>
<dbReference type="RefSeq" id="NP_444002.1">
    <property type="nucleotide sequence ID" value="NC_000914.2"/>
</dbReference>
<dbReference type="RefSeq" id="WP_010875250.1">
    <property type="nucleotide sequence ID" value="NC_000914.2"/>
</dbReference>
<dbReference type="KEGG" id="rhi:NGR_a02230"/>
<dbReference type="PATRIC" id="fig|394.7.peg.234"/>
<dbReference type="HOGENOM" id="CLU_166166_0_0_5"/>
<dbReference type="OrthoDB" id="8284461at2"/>
<dbReference type="Proteomes" id="UP000001054">
    <property type="component" value="Plasmid pNGR234a"/>
</dbReference>